<gene>
    <name evidence="1" type="primary">rpsT</name>
    <name type="ordered locus">Rpic_2832</name>
</gene>
<evidence type="ECO:0000255" key="1">
    <source>
        <dbReference type="HAMAP-Rule" id="MF_00500"/>
    </source>
</evidence>
<evidence type="ECO:0000256" key="2">
    <source>
        <dbReference type="SAM" id="MobiDB-lite"/>
    </source>
</evidence>
<evidence type="ECO:0000305" key="3"/>
<reference key="1">
    <citation type="submission" date="2008-05" db="EMBL/GenBank/DDBJ databases">
        <title>Complete sequence of chromosome 1 of Ralstonia pickettii 12J.</title>
        <authorList>
            <person name="Lucas S."/>
            <person name="Copeland A."/>
            <person name="Lapidus A."/>
            <person name="Glavina del Rio T."/>
            <person name="Dalin E."/>
            <person name="Tice H."/>
            <person name="Bruce D."/>
            <person name="Goodwin L."/>
            <person name="Pitluck S."/>
            <person name="Meincke L."/>
            <person name="Brettin T."/>
            <person name="Detter J.C."/>
            <person name="Han C."/>
            <person name="Kuske C.R."/>
            <person name="Schmutz J."/>
            <person name="Larimer F."/>
            <person name="Land M."/>
            <person name="Hauser L."/>
            <person name="Kyrpides N."/>
            <person name="Mikhailova N."/>
            <person name="Marsh T."/>
            <person name="Richardson P."/>
        </authorList>
    </citation>
    <scope>NUCLEOTIDE SEQUENCE [LARGE SCALE GENOMIC DNA]</scope>
    <source>
        <strain>12J</strain>
    </source>
</reference>
<organism>
    <name type="scientific">Ralstonia pickettii (strain 12J)</name>
    <dbReference type="NCBI Taxonomy" id="402626"/>
    <lineage>
        <taxon>Bacteria</taxon>
        <taxon>Pseudomonadati</taxon>
        <taxon>Pseudomonadota</taxon>
        <taxon>Betaproteobacteria</taxon>
        <taxon>Burkholderiales</taxon>
        <taxon>Burkholderiaceae</taxon>
        <taxon>Ralstonia</taxon>
    </lineage>
</organism>
<keyword id="KW-0687">Ribonucleoprotein</keyword>
<keyword id="KW-0689">Ribosomal protein</keyword>
<keyword id="KW-0694">RNA-binding</keyword>
<keyword id="KW-0699">rRNA-binding</keyword>
<name>RS20_RALPJ</name>
<proteinExistence type="inferred from homology"/>
<feature type="chain" id="PRO_1000126499" description="Small ribosomal subunit protein bS20">
    <location>
        <begin position="1"/>
        <end position="88"/>
    </location>
</feature>
<feature type="region of interest" description="Disordered" evidence="2">
    <location>
        <begin position="1"/>
        <end position="20"/>
    </location>
</feature>
<dbReference type="EMBL" id="CP001068">
    <property type="protein sequence ID" value="ACD27955.1"/>
    <property type="molecule type" value="Genomic_DNA"/>
</dbReference>
<dbReference type="SMR" id="B2UBA6"/>
<dbReference type="STRING" id="402626.Rpic_2832"/>
<dbReference type="KEGG" id="rpi:Rpic_2832"/>
<dbReference type="eggNOG" id="COG0268">
    <property type="taxonomic scope" value="Bacteria"/>
</dbReference>
<dbReference type="HOGENOM" id="CLU_160655_4_0_4"/>
<dbReference type="GO" id="GO:0005829">
    <property type="term" value="C:cytosol"/>
    <property type="evidence" value="ECO:0007669"/>
    <property type="project" value="TreeGrafter"/>
</dbReference>
<dbReference type="GO" id="GO:0015935">
    <property type="term" value="C:small ribosomal subunit"/>
    <property type="evidence" value="ECO:0007669"/>
    <property type="project" value="TreeGrafter"/>
</dbReference>
<dbReference type="GO" id="GO:0070181">
    <property type="term" value="F:small ribosomal subunit rRNA binding"/>
    <property type="evidence" value="ECO:0007669"/>
    <property type="project" value="TreeGrafter"/>
</dbReference>
<dbReference type="GO" id="GO:0003735">
    <property type="term" value="F:structural constituent of ribosome"/>
    <property type="evidence" value="ECO:0007669"/>
    <property type="project" value="InterPro"/>
</dbReference>
<dbReference type="GO" id="GO:0006412">
    <property type="term" value="P:translation"/>
    <property type="evidence" value="ECO:0007669"/>
    <property type="project" value="UniProtKB-UniRule"/>
</dbReference>
<dbReference type="FunFam" id="1.20.58.110:FF:000001">
    <property type="entry name" value="30S ribosomal protein S20"/>
    <property type="match status" value="1"/>
</dbReference>
<dbReference type="Gene3D" id="1.20.58.110">
    <property type="entry name" value="Ribosomal protein S20"/>
    <property type="match status" value="1"/>
</dbReference>
<dbReference type="HAMAP" id="MF_00500">
    <property type="entry name" value="Ribosomal_bS20"/>
    <property type="match status" value="1"/>
</dbReference>
<dbReference type="InterPro" id="IPR002583">
    <property type="entry name" value="Ribosomal_bS20"/>
</dbReference>
<dbReference type="InterPro" id="IPR036510">
    <property type="entry name" value="Ribosomal_bS20_sf"/>
</dbReference>
<dbReference type="NCBIfam" id="TIGR00029">
    <property type="entry name" value="S20"/>
    <property type="match status" value="1"/>
</dbReference>
<dbReference type="PANTHER" id="PTHR33398">
    <property type="entry name" value="30S RIBOSOMAL PROTEIN S20"/>
    <property type="match status" value="1"/>
</dbReference>
<dbReference type="PANTHER" id="PTHR33398:SF1">
    <property type="entry name" value="SMALL RIBOSOMAL SUBUNIT PROTEIN BS20C"/>
    <property type="match status" value="1"/>
</dbReference>
<dbReference type="Pfam" id="PF01649">
    <property type="entry name" value="Ribosomal_S20p"/>
    <property type="match status" value="1"/>
</dbReference>
<dbReference type="SUPFAM" id="SSF46992">
    <property type="entry name" value="Ribosomal protein S20"/>
    <property type="match status" value="1"/>
</dbReference>
<accession>B2UBA6</accession>
<comment type="function">
    <text evidence="1">Binds directly to 16S ribosomal RNA.</text>
</comment>
<comment type="similarity">
    <text evidence="1">Belongs to the bacterial ribosomal protein bS20 family.</text>
</comment>
<protein>
    <recommendedName>
        <fullName evidence="1">Small ribosomal subunit protein bS20</fullName>
    </recommendedName>
    <alternativeName>
        <fullName evidence="3">30S ribosomal protein S20</fullName>
    </alternativeName>
</protein>
<sequence>MANTAQARKRARQAVVQNAHNSALRSRLRTAIKGVRKAVAAGDKTAAAAAFKTAQSTIDSIADKKIVHKNKAARAKSRLSAAIKAMAA</sequence>